<keyword id="KW-0007">Acetylation</keyword>
<keyword id="KW-0148">Chlorophyll</keyword>
<keyword id="KW-0150">Chloroplast</keyword>
<keyword id="KW-0157">Chromophore</keyword>
<keyword id="KW-0464">Manganese</keyword>
<keyword id="KW-0472">Membrane</keyword>
<keyword id="KW-0479">Metal-binding</keyword>
<keyword id="KW-0597">Phosphoprotein</keyword>
<keyword id="KW-0602">Photosynthesis</keyword>
<keyword id="KW-0604">Photosystem II</keyword>
<keyword id="KW-0934">Plastid</keyword>
<keyword id="KW-0691">RNA editing</keyword>
<keyword id="KW-0793">Thylakoid</keyword>
<keyword id="KW-0812">Transmembrane</keyword>
<keyword id="KW-1133">Transmembrane helix</keyword>
<dbReference type="EMBL" id="AY178864">
    <property type="protein sequence ID" value="AAP29388.2"/>
    <property type="molecule type" value="Genomic_DNA"/>
</dbReference>
<dbReference type="RefSeq" id="NP_848056.3">
    <property type="nucleotide sequence ID" value="NC_004766.1"/>
</dbReference>
<dbReference type="SMR" id="Q85FM3"/>
<dbReference type="GeneID" id="807398"/>
<dbReference type="GO" id="GO:0009535">
    <property type="term" value="C:chloroplast thylakoid membrane"/>
    <property type="evidence" value="ECO:0007669"/>
    <property type="project" value="UniProtKB-SubCell"/>
</dbReference>
<dbReference type="GO" id="GO:0009523">
    <property type="term" value="C:photosystem II"/>
    <property type="evidence" value="ECO:0007669"/>
    <property type="project" value="UniProtKB-KW"/>
</dbReference>
<dbReference type="GO" id="GO:0016168">
    <property type="term" value="F:chlorophyll binding"/>
    <property type="evidence" value="ECO:0007669"/>
    <property type="project" value="UniProtKB-UniRule"/>
</dbReference>
<dbReference type="GO" id="GO:0045156">
    <property type="term" value="F:electron transporter, transferring electrons within the cyclic electron transport pathway of photosynthesis activity"/>
    <property type="evidence" value="ECO:0007669"/>
    <property type="project" value="InterPro"/>
</dbReference>
<dbReference type="GO" id="GO:0046872">
    <property type="term" value="F:metal ion binding"/>
    <property type="evidence" value="ECO:0007669"/>
    <property type="project" value="UniProtKB-KW"/>
</dbReference>
<dbReference type="GO" id="GO:0009772">
    <property type="term" value="P:photosynthetic electron transport in photosystem II"/>
    <property type="evidence" value="ECO:0007669"/>
    <property type="project" value="InterPro"/>
</dbReference>
<dbReference type="FunFam" id="1.10.10.670:FF:000001">
    <property type="entry name" value="Photosystem II CP43 reaction center protein"/>
    <property type="match status" value="1"/>
</dbReference>
<dbReference type="Gene3D" id="1.10.10.670">
    <property type="entry name" value="photosystem ii from thermosynechococcus elongatus"/>
    <property type="match status" value="1"/>
</dbReference>
<dbReference type="HAMAP" id="MF_01496">
    <property type="entry name" value="PSII_PsbC_CP43"/>
    <property type="match status" value="1"/>
</dbReference>
<dbReference type="InterPro" id="IPR000932">
    <property type="entry name" value="PS_antenna-like"/>
</dbReference>
<dbReference type="InterPro" id="IPR036001">
    <property type="entry name" value="PS_II_antenna-like_sf"/>
</dbReference>
<dbReference type="InterPro" id="IPR005869">
    <property type="entry name" value="PSII_PsbC"/>
</dbReference>
<dbReference type="InterPro" id="IPR044900">
    <property type="entry name" value="PSII_PsbC_sf"/>
</dbReference>
<dbReference type="NCBIfam" id="TIGR01153">
    <property type="entry name" value="psbC"/>
    <property type="match status" value="1"/>
</dbReference>
<dbReference type="Pfam" id="PF00421">
    <property type="entry name" value="PSII"/>
    <property type="match status" value="1"/>
</dbReference>
<dbReference type="SUPFAM" id="SSF161077">
    <property type="entry name" value="Photosystem II antenna protein-like"/>
    <property type="match status" value="1"/>
</dbReference>
<proteinExistence type="evidence at transcript level"/>
<sequence>MKILYSPRRFYPVETLFNGTLSLGGRDQETTGFAWWAGNARLINLSGKLLGAHVAHAGLIVFWAGAMNLFEVAHFVSEKPMYEQGLILLPHLATLGWGVGPGGEVADTFPYFVSGVLHLISSAVLGFGGIYHALIGPETLEESFPFFGYTWKDKNKMTTILGIHLILLGFGAFLLVFKALYFGGLYDTWAPGGGDVREITNLTLNPNIIFGYLLKSPFGGEGWIASVDNLEDIIGGHVWLGSICIFGGIWHILTKPFAWARRAFVWSGEAYLSYSLGALAIFGFTACCFVWFNNTAYPSEFYGPTGPEASQAQAFTFLVRDQRLGANIGSAQGPTGLGKYLMRSPTGEIIFGGETMRFWDLRAPWLEPLRGPNGLDLGKLKRDIQPWQERRSAEYMTHAPLGSLNSVGGVATEINAVNYVSPRSWLATSHFVLGFFFFVGHLWHAGRARAAAAGFEKGIDRDTEPVLSMTPLN</sequence>
<accession>Q85FM3</accession>
<gene>
    <name evidence="1" type="primary">psbC</name>
</gene>
<feature type="propeptide" id="PRO_0000431105" evidence="1">
    <location>
        <begin position="1"/>
        <end position="14"/>
    </location>
</feature>
<feature type="chain" id="PRO_0000077506" description="Photosystem II CP43 reaction center protein" evidence="1">
    <location>
        <begin position="15"/>
        <end position="473"/>
    </location>
</feature>
<feature type="transmembrane region" description="Helical" evidence="1">
    <location>
        <begin position="69"/>
        <end position="93"/>
    </location>
</feature>
<feature type="transmembrane region" description="Helical" evidence="1">
    <location>
        <begin position="134"/>
        <end position="155"/>
    </location>
</feature>
<feature type="transmembrane region" description="Helical" evidence="1">
    <location>
        <begin position="178"/>
        <end position="200"/>
    </location>
</feature>
<feature type="transmembrane region" description="Helical" evidence="1">
    <location>
        <begin position="255"/>
        <end position="275"/>
    </location>
</feature>
<feature type="transmembrane region" description="Helical" evidence="1">
    <location>
        <begin position="291"/>
        <end position="312"/>
    </location>
</feature>
<feature type="transmembrane region" description="Helical" evidence="1">
    <location>
        <begin position="447"/>
        <end position="471"/>
    </location>
</feature>
<feature type="binding site" evidence="1">
    <location>
        <position position="367"/>
    </location>
    <ligand>
        <name>[CaMn4O5] cluster</name>
        <dbReference type="ChEBI" id="CHEBI:189552"/>
    </ligand>
</feature>
<feature type="modified residue" description="N-acetylthreonine" evidence="1">
    <location>
        <position position="15"/>
    </location>
</feature>
<feature type="modified residue" description="Phosphothreonine" evidence="1">
    <location>
        <position position="15"/>
    </location>
</feature>
<protein>
    <recommendedName>
        <fullName evidence="1">Photosystem II CP43 reaction center protein</fullName>
    </recommendedName>
    <alternativeName>
        <fullName evidence="1">PSII 43 kDa protein</fullName>
    </alternativeName>
    <alternativeName>
        <fullName evidence="1">Protein CP-43</fullName>
    </alternativeName>
</protein>
<comment type="function">
    <text evidence="1">One of the components of the core complex of photosystem II (PSII). It binds chlorophyll and helps catalyze the primary light-induced photochemical processes of PSII. PSII is a light-driven water:plastoquinone oxidoreductase, using light energy to abstract electrons from H(2)O, generating O(2) and a proton gradient subsequently used for ATP formation.</text>
</comment>
<comment type="cofactor">
    <text evidence="1">Binds multiple chlorophylls and provides some of the ligands for the Ca-4Mn-5O cluster of the oxygen-evolving complex. It may also provide a ligand for a Cl- that is required for oxygen evolution. PSII binds additional chlorophylls, carotenoids and specific lipids.</text>
</comment>
<comment type="subunit">
    <text evidence="1">PSII is composed of 1 copy each of membrane proteins PsbA, PsbB, PsbC, PsbD, PsbE, PsbF, PsbH, PsbI, PsbJ, PsbK, PsbL, PsbM, PsbT, PsbX, PsbY, PsbZ, Psb30/Ycf12, at least 3 peripheral proteins of the oxygen-evolving complex and a large number of cofactors. It forms dimeric complexes.</text>
</comment>
<comment type="subcellular location">
    <subcellularLocation>
        <location evidence="1">Plastid</location>
        <location evidence="1">Chloroplast thylakoid membrane</location>
        <topology evidence="1">Multi-pass membrane protein</topology>
    </subcellularLocation>
</comment>
<comment type="RNA editing">
    <location>
        <position position="1" evidence="3"/>
    </location>
    <text evidence="3">The initiator methionine is created by RNA editing.</text>
</comment>
<comment type="similarity">
    <text evidence="1">Belongs to the PsbB/PsbC family. PsbC subfamily.</text>
</comment>
<comment type="caution">
    <text evidence="2">The start codon has not been identified for this gene; that indicated here is a suggestion.</text>
</comment>
<geneLocation type="chloroplast"/>
<evidence type="ECO:0000255" key="1">
    <source>
        <dbReference type="HAMAP-Rule" id="MF_01496"/>
    </source>
</evidence>
<evidence type="ECO:0000303" key="2">
    <source>
    </source>
</evidence>
<evidence type="ECO:0000305" key="3">
    <source>
    </source>
</evidence>
<reference key="1">
    <citation type="journal article" date="2003" name="DNA Res.">
        <title>Complete nucleotide sequence of the chloroplast genome from a leptosporangiate fern, Adiantum capillus-veneris L.</title>
        <authorList>
            <person name="Wolf P.G."/>
            <person name="Rowe C.A."/>
            <person name="Sinclair R.B."/>
            <person name="Hasebe M."/>
        </authorList>
    </citation>
    <scope>NUCLEOTIDE SEQUENCE [LARGE SCALE GENOMIC DNA]</scope>
</reference>
<reference key="2">
    <citation type="journal article" date="2004" name="Gene">
        <title>High levels of RNA editing in a vascular plant chloroplast genome: analysis of transcripts from the fern Adiantum capillus-veneris.</title>
        <authorList>
            <person name="Wolf P.G."/>
            <person name="Rowe C.A."/>
            <person name="Hasebe M."/>
        </authorList>
    </citation>
    <scope>NUCLEOTIDE SEQUENCE [GENOMIC DNA]</scope>
    <scope>SUGGESTION OF RNA EDITING</scope>
    <source>
        <tissue>Frond</tissue>
    </source>
</reference>
<name>PSBC_ADICA</name>
<organism>
    <name type="scientific">Adiantum capillus-veneris</name>
    <name type="common">Maidenhair fern</name>
    <dbReference type="NCBI Taxonomy" id="13818"/>
    <lineage>
        <taxon>Eukaryota</taxon>
        <taxon>Viridiplantae</taxon>
        <taxon>Streptophyta</taxon>
        <taxon>Embryophyta</taxon>
        <taxon>Tracheophyta</taxon>
        <taxon>Polypodiopsida</taxon>
        <taxon>Polypodiidae</taxon>
        <taxon>Polypodiales</taxon>
        <taxon>Pteridineae</taxon>
        <taxon>Pteridaceae</taxon>
        <taxon>Vittarioideae</taxon>
        <taxon>Adiantum</taxon>
    </lineage>
</organism>